<name>YQGF_NITEU</name>
<comment type="function">
    <text evidence="1">Could be a nuclease involved in processing of the 5'-end of pre-16S rRNA.</text>
</comment>
<comment type="subcellular location">
    <subcellularLocation>
        <location evidence="1">Cytoplasm</location>
    </subcellularLocation>
</comment>
<comment type="similarity">
    <text evidence="1">Belongs to the YqgF nuclease family.</text>
</comment>
<gene>
    <name type="ordered locus">NE1667</name>
</gene>
<sequence length="148" mass="16623">MPDMTSASSGTVLAFDFGKRRIGVAIGEHELRMAHPLTTIDQSMTRPRFEKIAELIEAWQPVLLVVGLSVHADGTEHEITRLCRRFARRLEGRFRIPVALADERYTTVIARSVLEEVGVTGKKQRPMLDQIAAQHILQTYFDLSHAAS</sequence>
<proteinExistence type="inferred from homology"/>
<organism>
    <name type="scientific">Nitrosomonas europaea (strain ATCC 19718 / CIP 103999 / KCTC 2705 / NBRC 14298)</name>
    <dbReference type="NCBI Taxonomy" id="228410"/>
    <lineage>
        <taxon>Bacteria</taxon>
        <taxon>Pseudomonadati</taxon>
        <taxon>Pseudomonadota</taxon>
        <taxon>Betaproteobacteria</taxon>
        <taxon>Nitrosomonadales</taxon>
        <taxon>Nitrosomonadaceae</taxon>
        <taxon>Nitrosomonas</taxon>
    </lineage>
</organism>
<keyword id="KW-0963">Cytoplasm</keyword>
<keyword id="KW-0378">Hydrolase</keyword>
<keyword id="KW-0540">Nuclease</keyword>
<keyword id="KW-1185">Reference proteome</keyword>
<keyword id="KW-0690">Ribosome biogenesis</keyword>
<evidence type="ECO:0000255" key="1">
    <source>
        <dbReference type="HAMAP-Rule" id="MF_00651"/>
    </source>
</evidence>
<protein>
    <recommendedName>
        <fullName evidence="1">Putative pre-16S rRNA nuclease</fullName>
        <ecNumber evidence="1">3.1.-.-</ecNumber>
    </recommendedName>
</protein>
<reference key="1">
    <citation type="journal article" date="2003" name="J. Bacteriol.">
        <title>Complete genome sequence of the ammonia-oxidizing bacterium and obligate chemolithoautotroph Nitrosomonas europaea.</title>
        <authorList>
            <person name="Chain P."/>
            <person name="Lamerdin J.E."/>
            <person name="Larimer F.W."/>
            <person name="Regala W."/>
            <person name="Lao V."/>
            <person name="Land M.L."/>
            <person name="Hauser L."/>
            <person name="Hooper A.B."/>
            <person name="Klotz M.G."/>
            <person name="Norton J."/>
            <person name="Sayavedra-Soto L.A."/>
            <person name="Arciero D.M."/>
            <person name="Hommes N.G."/>
            <person name="Whittaker M.M."/>
            <person name="Arp D.J."/>
        </authorList>
    </citation>
    <scope>NUCLEOTIDE SEQUENCE [LARGE SCALE GENOMIC DNA]</scope>
    <source>
        <strain>ATCC 19718 / CIP 103999 / KCTC 2705 / NBRC 14298</strain>
    </source>
</reference>
<feature type="chain" id="PRO_0000172105" description="Putative pre-16S rRNA nuclease">
    <location>
        <begin position="1"/>
        <end position="148"/>
    </location>
</feature>
<dbReference type="EC" id="3.1.-.-" evidence="1"/>
<dbReference type="EMBL" id="AL954747">
    <property type="protein sequence ID" value="CAD85578.1"/>
    <property type="molecule type" value="Genomic_DNA"/>
</dbReference>
<dbReference type="SMR" id="Q82U42"/>
<dbReference type="STRING" id="228410.NE1667"/>
<dbReference type="GeneID" id="87104831"/>
<dbReference type="KEGG" id="neu:NE1667"/>
<dbReference type="eggNOG" id="COG0816">
    <property type="taxonomic scope" value="Bacteria"/>
</dbReference>
<dbReference type="HOGENOM" id="CLU_098240_3_2_4"/>
<dbReference type="OrthoDB" id="9796140at2"/>
<dbReference type="PhylomeDB" id="Q82U42"/>
<dbReference type="Proteomes" id="UP000001416">
    <property type="component" value="Chromosome"/>
</dbReference>
<dbReference type="GO" id="GO:0005829">
    <property type="term" value="C:cytosol"/>
    <property type="evidence" value="ECO:0007669"/>
    <property type="project" value="TreeGrafter"/>
</dbReference>
<dbReference type="GO" id="GO:0004518">
    <property type="term" value="F:nuclease activity"/>
    <property type="evidence" value="ECO:0007669"/>
    <property type="project" value="UniProtKB-KW"/>
</dbReference>
<dbReference type="GO" id="GO:0000967">
    <property type="term" value="P:rRNA 5'-end processing"/>
    <property type="evidence" value="ECO:0007669"/>
    <property type="project" value="UniProtKB-UniRule"/>
</dbReference>
<dbReference type="CDD" id="cd16964">
    <property type="entry name" value="YqgF"/>
    <property type="match status" value="1"/>
</dbReference>
<dbReference type="Gene3D" id="3.30.420.140">
    <property type="entry name" value="YqgF/RNase H-like domain"/>
    <property type="match status" value="1"/>
</dbReference>
<dbReference type="HAMAP" id="MF_00651">
    <property type="entry name" value="Nuclease_YqgF"/>
    <property type="match status" value="1"/>
</dbReference>
<dbReference type="InterPro" id="IPR012337">
    <property type="entry name" value="RNaseH-like_sf"/>
</dbReference>
<dbReference type="InterPro" id="IPR005227">
    <property type="entry name" value="YqgF"/>
</dbReference>
<dbReference type="InterPro" id="IPR006641">
    <property type="entry name" value="YqgF/RNaseH-like_dom"/>
</dbReference>
<dbReference type="InterPro" id="IPR037027">
    <property type="entry name" value="YqgF/RNaseH-like_dom_sf"/>
</dbReference>
<dbReference type="NCBIfam" id="TIGR00250">
    <property type="entry name" value="RNAse_H_YqgF"/>
    <property type="match status" value="1"/>
</dbReference>
<dbReference type="PANTHER" id="PTHR33317">
    <property type="entry name" value="POLYNUCLEOTIDYL TRANSFERASE, RIBONUCLEASE H-LIKE SUPERFAMILY PROTEIN"/>
    <property type="match status" value="1"/>
</dbReference>
<dbReference type="PANTHER" id="PTHR33317:SF4">
    <property type="entry name" value="POLYNUCLEOTIDYL TRANSFERASE, RIBONUCLEASE H-LIKE SUPERFAMILY PROTEIN"/>
    <property type="match status" value="1"/>
</dbReference>
<dbReference type="Pfam" id="PF03652">
    <property type="entry name" value="RuvX"/>
    <property type="match status" value="1"/>
</dbReference>
<dbReference type="SMART" id="SM00732">
    <property type="entry name" value="YqgFc"/>
    <property type="match status" value="1"/>
</dbReference>
<dbReference type="SUPFAM" id="SSF53098">
    <property type="entry name" value="Ribonuclease H-like"/>
    <property type="match status" value="1"/>
</dbReference>
<accession>Q82U42</accession>